<sequence length="1378" mass="154040">MSLVNFYGQLSNTQQFDQIRINIASPDQVRSWSFGEVTKPETINYRTFKPEKDGLFCARIFGPVKDYECLCGKYKRMKNRGIICEKCGVEVTVSRVRRERMGHIELAAPIAHIWFLKSLPSRISTLLDMTMRDLEKILYFENYVVLDPGLSILQKGELLTEEELQKAKDKYGEDAFTASIGAEVIQQMLKDLDFAKLKQELYEELQNTTSEVKKKKLVKRLKLVEDFLESENKPEWMIIDVLPVIPPEIRPLVMLDGGRFATSDLNELYRRVINRNNRLKKLIESKAPDIIVRNEKRMLQEAVDALFDNGRRGRAAKNANKRPFKSLSDMLKGKQGRFRQNLLGKRVDYSGRSVIVVGPELKLHQCGLPKKMALELFKPFIYSKLELYGIATTIKAAKRMVEAEKPEVWDVLEEVIREHPVLLNRAPTLHRLGIQAFEPLLIEGKAIQLHPLVCAAFNADFDGDQMAVHIPLSIEAQLEARVFMMSTNNILSPANGRPIIVPDKDIVLGLYYLTIAFDNEVGEGLMFSDLAEMEHALYNKFITIHTKIKYRRNQLNAEGKMVPVIVDTTYGRLMVGELLPSNPNIEFKFINKQLTKKDISLVIDLVYRHCGQKATVIFADQLMKLGFKYACSSGISFGMDDMVVPESKSTHINETQLEIKEFEQQYSNGLITYGEKYNKVVDAWSRCTDRVANDMMKEIATPPINDEPNHQKINAIYMMAVSGARGSFQQIKQLGGMRGLMTKSNGQIIQTPIISNFKEGLTEFECFNSANGMRKGQIDTALKTASSGYLTRKLVDVAQDCIITEKDCGTDKGIEVKSVIEGGEVIVSLAEKILGRTAAIDIFHPVTNDLILNKGELINEVKLEQIESAGLDRIMIKSVLTCESTTGICSICYGRDLATGTLVSEGEAIGVIAAQSIGEPGTQLTMRTFHIGGAATKGAEISSVEASYDAKVKIISRNVVINSEERKIVMSRNCELLLLDNNGNEKARHKIPYGARLLVDDGDMVIKTQKLAEWDPYTIPIITEKSGKVLFKDMVEGISIRDVTDEATGIPSKVIIESKQYSRGAELRPRIQLLDAKGEVITLSNGLEARYYLPVGAVLSVEDGVQISVGDIIARIPKESTTTKDITGGLPRVAELVEARRPKDHAVIAEVDGRVEFGKDYKSKRRIIIHPIDETMSIEYMVPKGKHVVVNEGDFVKKGDLLIDGNPVLQDILKVMGVEVLANYIVKEVQAVYRLQGVKIDDKHIEVIIRQMLQKVEITDSGGTTLLVGEKVDRHEFDEINEKAIKNGLKPAEAQLILQGITKASLQTRSFISAASFQETTRVLTEAAIAGKVDKLRGLKENVIVGRLVPAGTGYFMDKMRKAAVKLDEENSINADKG</sequence>
<name>RPOC_RICCK</name>
<accession>A8EXK9</accession>
<gene>
    <name evidence="1" type="primary">rpoC</name>
    <name type="ordered locus">A1E_00720</name>
</gene>
<evidence type="ECO:0000255" key="1">
    <source>
        <dbReference type="HAMAP-Rule" id="MF_01322"/>
    </source>
</evidence>
<protein>
    <recommendedName>
        <fullName evidence="1">DNA-directed RNA polymerase subunit beta'</fullName>
        <shortName evidence="1">RNAP subunit beta'</shortName>
        <ecNumber evidence="1">2.7.7.6</ecNumber>
    </recommendedName>
    <alternativeName>
        <fullName evidence="1">RNA polymerase subunit beta'</fullName>
    </alternativeName>
    <alternativeName>
        <fullName evidence="1">Transcriptase subunit beta'</fullName>
    </alternativeName>
</protein>
<proteinExistence type="inferred from homology"/>
<dbReference type="EC" id="2.7.7.6" evidence="1"/>
<dbReference type="EMBL" id="CP000409">
    <property type="protein sequence ID" value="ABV73092.1"/>
    <property type="molecule type" value="Genomic_DNA"/>
</dbReference>
<dbReference type="RefSeq" id="WP_012148293.1">
    <property type="nucleotide sequence ID" value="NC_009879.1"/>
</dbReference>
<dbReference type="SMR" id="A8EXK9"/>
<dbReference type="STRING" id="293613.A1E_00720"/>
<dbReference type="KEGG" id="rcm:A1E_00720"/>
<dbReference type="eggNOG" id="COG0086">
    <property type="taxonomic scope" value="Bacteria"/>
</dbReference>
<dbReference type="HOGENOM" id="CLU_000524_3_1_5"/>
<dbReference type="Proteomes" id="UP000007056">
    <property type="component" value="Chromosome"/>
</dbReference>
<dbReference type="GO" id="GO:0000428">
    <property type="term" value="C:DNA-directed RNA polymerase complex"/>
    <property type="evidence" value="ECO:0007669"/>
    <property type="project" value="UniProtKB-KW"/>
</dbReference>
<dbReference type="GO" id="GO:0003677">
    <property type="term" value="F:DNA binding"/>
    <property type="evidence" value="ECO:0007669"/>
    <property type="project" value="UniProtKB-UniRule"/>
</dbReference>
<dbReference type="GO" id="GO:0003899">
    <property type="term" value="F:DNA-directed RNA polymerase activity"/>
    <property type="evidence" value="ECO:0007669"/>
    <property type="project" value="UniProtKB-UniRule"/>
</dbReference>
<dbReference type="GO" id="GO:0000287">
    <property type="term" value="F:magnesium ion binding"/>
    <property type="evidence" value="ECO:0007669"/>
    <property type="project" value="UniProtKB-UniRule"/>
</dbReference>
<dbReference type="GO" id="GO:0008270">
    <property type="term" value="F:zinc ion binding"/>
    <property type="evidence" value="ECO:0007669"/>
    <property type="project" value="UniProtKB-UniRule"/>
</dbReference>
<dbReference type="GO" id="GO:0006351">
    <property type="term" value="P:DNA-templated transcription"/>
    <property type="evidence" value="ECO:0007669"/>
    <property type="project" value="UniProtKB-UniRule"/>
</dbReference>
<dbReference type="CDD" id="cd02655">
    <property type="entry name" value="RNAP_beta'_C"/>
    <property type="match status" value="1"/>
</dbReference>
<dbReference type="CDD" id="cd01609">
    <property type="entry name" value="RNAP_beta'_N"/>
    <property type="match status" value="1"/>
</dbReference>
<dbReference type="FunFam" id="1.10.150.390:FF:000002">
    <property type="entry name" value="DNA-directed RNA polymerase subunit beta"/>
    <property type="match status" value="1"/>
</dbReference>
<dbReference type="Gene3D" id="1.10.132.30">
    <property type="match status" value="1"/>
</dbReference>
<dbReference type="Gene3D" id="1.10.150.390">
    <property type="match status" value="1"/>
</dbReference>
<dbReference type="Gene3D" id="1.10.1790.20">
    <property type="match status" value="1"/>
</dbReference>
<dbReference type="Gene3D" id="1.10.40.90">
    <property type="match status" value="1"/>
</dbReference>
<dbReference type="Gene3D" id="2.40.40.20">
    <property type="match status" value="1"/>
</dbReference>
<dbReference type="Gene3D" id="2.40.50.100">
    <property type="match status" value="3"/>
</dbReference>
<dbReference type="Gene3D" id="4.10.860.120">
    <property type="entry name" value="RNA polymerase II, clamp domain"/>
    <property type="match status" value="1"/>
</dbReference>
<dbReference type="Gene3D" id="1.10.274.100">
    <property type="entry name" value="RNA polymerase Rpb1, domain 3"/>
    <property type="match status" value="2"/>
</dbReference>
<dbReference type="HAMAP" id="MF_01322">
    <property type="entry name" value="RNApol_bact_RpoC"/>
    <property type="match status" value="1"/>
</dbReference>
<dbReference type="InterPro" id="IPR045867">
    <property type="entry name" value="DNA-dir_RpoC_beta_prime"/>
</dbReference>
<dbReference type="InterPro" id="IPR012754">
    <property type="entry name" value="DNA-dir_RpoC_beta_prime_bact"/>
</dbReference>
<dbReference type="InterPro" id="IPR000722">
    <property type="entry name" value="RNA_pol_asu"/>
</dbReference>
<dbReference type="InterPro" id="IPR006592">
    <property type="entry name" value="RNA_pol_N"/>
</dbReference>
<dbReference type="InterPro" id="IPR007080">
    <property type="entry name" value="RNA_pol_Rpb1_1"/>
</dbReference>
<dbReference type="InterPro" id="IPR007066">
    <property type="entry name" value="RNA_pol_Rpb1_3"/>
</dbReference>
<dbReference type="InterPro" id="IPR042102">
    <property type="entry name" value="RNA_pol_Rpb1_3_sf"/>
</dbReference>
<dbReference type="InterPro" id="IPR007083">
    <property type="entry name" value="RNA_pol_Rpb1_4"/>
</dbReference>
<dbReference type="InterPro" id="IPR007081">
    <property type="entry name" value="RNA_pol_Rpb1_5"/>
</dbReference>
<dbReference type="InterPro" id="IPR044893">
    <property type="entry name" value="RNA_pol_Rpb1_clamp_domain"/>
</dbReference>
<dbReference type="InterPro" id="IPR038120">
    <property type="entry name" value="Rpb1_funnel_sf"/>
</dbReference>
<dbReference type="NCBIfam" id="TIGR02386">
    <property type="entry name" value="rpoC_TIGR"/>
    <property type="match status" value="1"/>
</dbReference>
<dbReference type="PANTHER" id="PTHR19376">
    <property type="entry name" value="DNA-DIRECTED RNA POLYMERASE"/>
    <property type="match status" value="1"/>
</dbReference>
<dbReference type="PANTHER" id="PTHR19376:SF54">
    <property type="entry name" value="DNA-DIRECTED RNA POLYMERASE SUBUNIT BETA"/>
    <property type="match status" value="1"/>
</dbReference>
<dbReference type="Pfam" id="PF04997">
    <property type="entry name" value="RNA_pol_Rpb1_1"/>
    <property type="match status" value="1"/>
</dbReference>
<dbReference type="Pfam" id="PF00623">
    <property type="entry name" value="RNA_pol_Rpb1_2"/>
    <property type="match status" value="2"/>
</dbReference>
<dbReference type="Pfam" id="PF04983">
    <property type="entry name" value="RNA_pol_Rpb1_3"/>
    <property type="match status" value="1"/>
</dbReference>
<dbReference type="Pfam" id="PF05000">
    <property type="entry name" value="RNA_pol_Rpb1_4"/>
    <property type="match status" value="1"/>
</dbReference>
<dbReference type="Pfam" id="PF04998">
    <property type="entry name" value="RNA_pol_Rpb1_5"/>
    <property type="match status" value="1"/>
</dbReference>
<dbReference type="SMART" id="SM00663">
    <property type="entry name" value="RPOLA_N"/>
    <property type="match status" value="1"/>
</dbReference>
<dbReference type="SUPFAM" id="SSF64484">
    <property type="entry name" value="beta and beta-prime subunits of DNA dependent RNA-polymerase"/>
    <property type="match status" value="1"/>
</dbReference>
<comment type="function">
    <text evidence="1">DNA-dependent RNA polymerase catalyzes the transcription of DNA into RNA using the four ribonucleoside triphosphates as substrates.</text>
</comment>
<comment type="catalytic activity">
    <reaction evidence="1">
        <text>RNA(n) + a ribonucleoside 5'-triphosphate = RNA(n+1) + diphosphate</text>
        <dbReference type="Rhea" id="RHEA:21248"/>
        <dbReference type="Rhea" id="RHEA-COMP:14527"/>
        <dbReference type="Rhea" id="RHEA-COMP:17342"/>
        <dbReference type="ChEBI" id="CHEBI:33019"/>
        <dbReference type="ChEBI" id="CHEBI:61557"/>
        <dbReference type="ChEBI" id="CHEBI:140395"/>
        <dbReference type="EC" id="2.7.7.6"/>
    </reaction>
</comment>
<comment type="cofactor">
    <cofactor evidence="1">
        <name>Mg(2+)</name>
        <dbReference type="ChEBI" id="CHEBI:18420"/>
    </cofactor>
    <text evidence="1">Binds 1 Mg(2+) ion per subunit.</text>
</comment>
<comment type="cofactor">
    <cofactor evidence="1">
        <name>Zn(2+)</name>
        <dbReference type="ChEBI" id="CHEBI:29105"/>
    </cofactor>
    <text evidence="1">Binds 2 Zn(2+) ions per subunit.</text>
</comment>
<comment type="subunit">
    <text evidence="1">The RNAP catalytic core consists of 2 alpha, 1 beta, 1 beta' and 1 omega subunit. When a sigma factor is associated with the core the holoenzyme is formed, which can initiate transcription.</text>
</comment>
<comment type="similarity">
    <text evidence="1">Belongs to the RNA polymerase beta' chain family.</text>
</comment>
<feature type="chain" id="PRO_0000353421" description="DNA-directed RNA polymerase subunit beta'">
    <location>
        <begin position="1"/>
        <end position="1378"/>
    </location>
</feature>
<feature type="binding site" evidence="1">
    <location>
        <position position="69"/>
    </location>
    <ligand>
        <name>Zn(2+)</name>
        <dbReference type="ChEBI" id="CHEBI:29105"/>
        <label>1</label>
    </ligand>
</feature>
<feature type="binding site" evidence="1">
    <location>
        <position position="71"/>
    </location>
    <ligand>
        <name>Zn(2+)</name>
        <dbReference type="ChEBI" id="CHEBI:29105"/>
        <label>1</label>
    </ligand>
</feature>
<feature type="binding site" evidence="1">
    <location>
        <position position="84"/>
    </location>
    <ligand>
        <name>Zn(2+)</name>
        <dbReference type="ChEBI" id="CHEBI:29105"/>
        <label>1</label>
    </ligand>
</feature>
<feature type="binding site" evidence="1">
    <location>
        <position position="87"/>
    </location>
    <ligand>
        <name>Zn(2+)</name>
        <dbReference type="ChEBI" id="CHEBI:29105"/>
        <label>1</label>
    </ligand>
</feature>
<feature type="binding site" evidence="1">
    <location>
        <position position="460"/>
    </location>
    <ligand>
        <name>Mg(2+)</name>
        <dbReference type="ChEBI" id="CHEBI:18420"/>
    </ligand>
</feature>
<feature type="binding site" evidence="1">
    <location>
        <position position="462"/>
    </location>
    <ligand>
        <name>Mg(2+)</name>
        <dbReference type="ChEBI" id="CHEBI:18420"/>
    </ligand>
</feature>
<feature type="binding site" evidence="1">
    <location>
        <position position="464"/>
    </location>
    <ligand>
        <name>Mg(2+)</name>
        <dbReference type="ChEBI" id="CHEBI:18420"/>
    </ligand>
</feature>
<feature type="binding site" evidence="1">
    <location>
        <position position="808"/>
    </location>
    <ligand>
        <name>Zn(2+)</name>
        <dbReference type="ChEBI" id="CHEBI:29105"/>
        <label>2</label>
    </ligand>
</feature>
<feature type="binding site" evidence="1">
    <location>
        <position position="882"/>
    </location>
    <ligand>
        <name>Zn(2+)</name>
        <dbReference type="ChEBI" id="CHEBI:29105"/>
        <label>2</label>
    </ligand>
</feature>
<feature type="binding site" evidence="1">
    <location>
        <position position="889"/>
    </location>
    <ligand>
        <name>Zn(2+)</name>
        <dbReference type="ChEBI" id="CHEBI:29105"/>
        <label>2</label>
    </ligand>
</feature>
<feature type="binding site" evidence="1">
    <location>
        <position position="892"/>
    </location>
    <ligand>
        <name>Zn(2+)</name>
        <dbReference type="ChEBI" id="CHEBI:29105"/>
        <label>2</label>
    </ligand>
</feature>
<organism>
    <name type="scientific">Rickettsia canadensis (strain McKiel)</name>
    <dbReference type="NCBI Taxonomy" id="293613"/>
    <lineage>
        <taxon>Bacteria</taxon>
        <taxon>Pseudomonadati</taxon>
        <taxon>Pseudomonadota</taxon>
        <taxon>Alphaproteobacteria</taxon>
        <taxon>Rickettsiales</taxon>
        <taxon>Rickettsiaceae</taxon>
        <taxon>Rickettsieae</taxon>
        <taxon>Rickettsia</taxon>
        <taxon>belli group</taxon>
    </lineage>
</organism>
<keyword id="KW-0240">DNA-directed RNA polymerase</keyword>
<keyword id="KW-0460">Magnesium</keyword>
<keyword id="KW-0479">Metal-binding</keyword>
<keyword id="KW-0548">Nucleotidyltransferase</keyword>
<keyword id="KW-0804">Transcription</keyword>
<keyword id="KW-0808">Transferase</keyword>
<keyword id="KW-0862">Zinc</keyword>
<reference key="1">
    <citation type="submission" date="2007-09" db="EMBL/GenBank/DDBJ databases">
        <title>Complete genome sequence of Rickettsia canadensis.</title>
        <authorList>
            <person name="Madan A."/>
            <person name="Fahey J."/>
            <person name="Helton E."/>
            <person name="Ketteman M."/>
            <person name="Madan A."/>
            <person name="Rodrigues S."/>
            <person name="Sanchez A."/>
            <person name="Whiting M."/>
            <person name="Dasch G."/>
            <person name="Eremeeva M."/>
        </authorList>
    </citation>
    <scope>NUCLEOTIDE SEQUENCE [LARGE SCALE GENOMIC DNA]</scope>
    <source>
        <strain>McKiel</strain>
    </source>
</reference>